<reference key="1">
    <citation type="journal article" date="1991" name="Genes Dev.">
        <title>The phage T4 nrdB intron: a deletion mutant of a version found in the wild.</title>
        <authorList>
            <person name="Eddy S.R."/>
            <person name="Gold L."/>
        </authorList>
    </citation>
    <scope>NUCLEOTIDE SEQUENCE [GENOMIC DNA]</scope>
</reference>
<keyword id="KW-0255">Endonuclease</keyword>
<keyword id="KW-0378">Hydrolase</keyword>
<keyword id="KW-0404">Intron homing</keyword>
<keyword id="KW-0540">Nuclease</keyword>
<sequence length="269" mass="30814">MNYRKIWIDANGPIPKDSDGRTDEIHHKDGNRENNDLDNLMCLSIQEHYDIHLAQKDYQACHAIKLRMKYSPEEISELASKAAKSREIQIFNIPEVRAKNIASIKSKIENGTFHLLDGEIQRKSNLNRVALGIHNFQQAEHIAKVKERNIAAIKEGTHVFCGGKMQSETQSKRVNDGSHHFLSEDHKKRTSAKTLEMVKNGTHPAQKEITCDFCGHIGKGPGFYLKHNDRCKLNPNRIQLNCPYCDKKDLSPSTYKRWHGDNCKARFND</sequence>
<dbReference type="EC" id="3.1.-.-"/>
<dbReference type="EMBL" id="X59078">
    <property type="protein sequence ID" value="CAA41802.1"/>
    <property type="molecule type" value="Genomic_DNA"/>
</dbReference>
<dbReference type="REBASE" id="2626">
    <property type="entry name" value="I-TevIII"/>
</dbReference>
<dbReference type="KEGG" id="vg:22113975"/>
<dbReference type="OrthoDB" id="5361at10239"/>
<dbReference type="GO" id="GO:0004519">
    <property type="term" value="F:endonuclease activity"/>
    <property type="evidence" value="ECO:0007669"/>
    <property type="project" value="UniProtKB-KW"/>
</dbReference>
<dbReference type="GO" id="GO:0006314">
    <property type="term" value="P:intron homing"/>
    <property type="evidence" value="ECO:0007669"/>
    <property type="project" value="UniProtKB-KW"/>
</dbReference>
<dbReference type="CDD" id="cd00085">
    <property type="entry name" value="HNHc"/>
    <property type="match status" value="1"/>
</dbReference>
<dbReference type="InterPro" id="IPR044925">
    <property type="entry name" value="His-Me_finger_sf"/>
</dbReference>
<dbReference type="InterPro" id="IPR003615">
    <property type="entry name" value="HNH_nuc"/>
</dbReference>
<dbReference type="Pfam" id="PF13392">
    <property type="entry name" value="HNH_3"/>
    <property type="match status" value="1"/>
</dbReference>
<dbReference type="SUPFAM" id="SSF54060">
    <property type="entry name" value="His-Me finger endonucleases"/>
    <property type="match status" value="1"/>
</dbReference>
<organism>
    <name type="scientific">Enterobacteria phage RB3</name>
    <name type="common">Bacteriophage RB3</name>
    <dbReference type="NCBI Taxonomy" id="31533"/>
    <lineage>
        <taxon>Viruses</taxon>
        <taxon>Duplodnaviria</taxon>
        <taxon>Heunggongvirae</taxon>
        <taxon>Uroviricota</taxon>
        <taxon>Caudoviricetes</taxon>
        <taxon>Straboviridae</taxon>
        <taxon>Tevenvirinae</taxon>
        <taxon>Tequatrovirus</taxon>
        <taxon>Tequatrovirus RB3</taxon>
    </lineage>
</organism>
<proteinExistence type="predicted"/>
<name>TEV3_BPR03</name>
<feature type="chain" id="PRO_0000192794" description="Intron-associated endonuclease 3">
    <location>
        <begin position="1"/>
        <end position="269"/>
    </location>
</feature>
<accession>Q38419</accession>
<gene>
    <name type="primary">ITEVIIIR</name>
</gene>
<comment type="function">
    <text>This endonuclease is specific to the nrdB gene splice junction and is involved in intron homing.</text>
</comment>
<organismHost>
    <name type="scientific">Escherichia coli</name>
    <dbReference type="NCBI Taxonomy" id="562"/>
</organismHost>
<protein>
    <recommendedName>
        <fullName>Intron-associated endonuclease 3</fullName>
        <ecNumber>3.1.-.-</ecNumber>
    </recommendedName>
    <alternativeName>
        <fullName>I-TevIII</fullName>
    </alternativeName>
</protein>